<organism>
    <name type="scientific">Mus musculus</name>
    <name type="common">Mouse</name>
    <dbReference type="NCBI Taxonomy" id="10090"/>
    <lineage>
        <taxon>Eukaryota</taxon>
        <taxon>Metazoa</taxon>
        <taxon>Chordata</taxon>
        <taxon>Craniata</taxon>
        <taxon>Vertebrata</taxon>
        <taxon>Euteleostomi</taxon>
        <taxon>Mammalia</taxon>
        <taxon>Eutheria</taxon>
        <taxon>Euarchontoglires</taxon>
        <taxon>Glires</taxon>
        <taxon>Rodentia</taxon>
        <taxon>Myomorpha</taxon>
        <taxon>Muroidea</taxon>
        <taxon>Muridae</taxon>
        <taxon>Murinae</taxon>
        <taxon>Mus</taxon>
        <taxon>Mus</taxon>
    </lineage>
</organism>
<accession>Q76JU9</accession>
<accession>A2RS88</accession>
<accession>Q8K3T5</accession>
<sequence length="300" mass="31804">MDLPPQLSFALYVSAFALGFPLNLLAIRGAVSHAKLRLTPSLVYTLHLGCSDLLLAITLPLKAVEALASGAWPLPLPFCPVFALAHFAPLYAGGGFLAALSAGRYLGAAFPFGYQAIRRPRYSWGVCVAIWALVLCHLGLALGLETSGSWLDNSTSSLGINIPVNGSPVCLEAWDPDSARPARLSFSILLFFLPLVITAFCYVGCLRALVRSGLSHKRKLRAAWVAGGALLTLLLCLGPYNASNVASFINPDLGGSWRKLGLITGAWSVVLNPLVTGYLGTGPGRGTICVTRTQRGTIQK</sequence>
<comment type="function">
    <text evidence="1 5 6 7 8 9 10 11">G-protein coupled receptor for medium and long chain saturated and unsaturated fatty acids that plays an important role in glucose homeostasis. Fatty acid binding increases glucose-stimulated insulin secretion, and may also enhance the secretion of glucagon-like peptide 1 (GLP-1). May also play a role in bone homeostasis; receptor signaling activates pathways that inhibit osteoclast differentiation (PubMed:23335512). Ligand binding leads to a conformation change that triggers signaling via G-proteins that activate phospholipase C, leading to an increase of the intracellular calcium concentration. Seems to act through a G(q) and G(i)-mediated pathway. Mediates the anti-inflammatory effects of omega-3 polyunsaturated fatty acids (PUFAs) via inhibition of NLRP3 inflammasome activation.</text>
</comment>
<comment type="activity regulation">
    <text evidence="10 11">Is also activated by synthetic agonists, such as AM-8182, AM-6331 and TAK-875 (fasiglifam). AM-8182 is a full agonist, while AM-6331 and TAK-875 (fasiglifam) are partial agonists that potentiate the activity of the endogenous ligands, such as alpha-linolenic acid and gamma-linolenic acid.</text>
</comment>
<comment type="subcellular location">
    <subcellularLocation>
        <location evidence="6 11">Cell membrane</location>
        <topology evidence="2">Multi-pass membrane protein</topology>
    </subcellularLocation>
</comment>
<comment type="tissue specificity">
    <text evidence="4 6">Expressed in pancreatic islet beta cells (at protein level) (PubMed:16044321). Expressed in pancreatic islet beta cells.</text>
</comment>
<comment type="disruption phenotype">
    <text evidence="7 8 9 10">No visible phenotype at birth and during the following six weeks. Male mice tend to develop a slightly decreased glucose tolerance after 13 weeks of age, but this is not observed with female mice. Insulin secretion in response to glucose is unchanged in mutant mice, but it is not potentiated by fatty acids, contrary to what is observed with wild-type mice. On the other hand, wild-type and mutant mice display the same inhibition of the first phase of glucose-stimulated insulin secretion after prolonged exposure to fatty acids or exposure to a high-fat diet (PubMed:17395749, PubMed:18559658). Compared to wild-type, mutant mice that are kept on a high-fat diet display a decrease of the second phase of glucose-stimulated insulin secretion (PubMed:18559658). Mutant mice do not display increased secretion of glucagon-like peptide 1 (GLP-1) in response to oral absorption of corn oil and display slightly increased blood glucose levels after oral absorption of corn oil (PubMed:23403053). Besides, mutant mice display decreased bone density (PubMed:23335512).</text>
</comment>
<comment type="similarity">
    <text evidence="3">Belongs to the G-protein coupled receptor 1 family.</text>
</comment>
<keyword id="KW-1003">Cell membrane</keyword>
<keyword id="KW-1015">Disulfide bond</keyword>
<keyword id="KW-0297">G-protein coupled receptor</keyword>
<keyword id="KW-0325">Glycoprotein</keyword>
<keyword id="KW-0446">Lipid-binding</keyword>
<keyword id="KW-0472">Membrane</keyword>
<keyword id="KW-0675">Receptor</keyword>
<keyword id="KW-1185">Reference proteome</keyword>
<keyword id="KW-0807">Transducer</keyword>
<keyword id="KW-0812">Transmembrane</keyword>
<keyword id="KW-1133">Transmembrane helix</keyword>
<feature type="chain" id="PRO_0000227755" description="Free fatty acid receptor 1">
    <location>
        <begin position="1"/>
        <end position="300"/>
    </location>
</feature>
<feature type="topological domain" description="Extracellular" evidence="1 2">
    <location>
        <begin position="1"/>
        <end position="8"/>
    </location>
</feature>
<feature type="transmembrane region" description="Helical; Name=1" evidence="1 2">
    <location>
        <begin position="9"/>
        <end position="31"/>
    </location>
</feature>
<feature type="topological domain" description="Cytoplasmic" evidence="1 2">
    <location>
        <begin position="32"/>
        <end position="41"/>
    </location>
</feature>
<feature type="transmembrane region" description="Helical; Name=2" evidence="1 2">
    <location>
        <begin position="42"/>
        <end position="64"/>
    </location>
</feature>
<feature type="topological domain" description="Extracellular" evidence="1 2">
    <location>
        <begin position="65"/>
        <end position="79"/>
    </location>
</feature>
<feature type="transmembrane region" description="Helical; Name=3" evidence="1 2">
    <location>
        <begin position="80"/>
        <end position="101"/>
    </location>
</feature>
<feature type="topological domain" description="Cytoplasmic" evidence="1 2">
    <location>
        <begin position="102"/>
        <end position="121"/>
    </location>
</feature>
<feature type="transmembrane region" description="Helical; Name=4" evidence="1 2">
    <location>
        <begin position="122"/>
        <end position="142"/>
    </location>
</feature>
<feature type="topological domain" description="Extracellular" evidence="1 2">
    <location>
        <begin position="143"/>
        <end position="178"/>
    </location>
</feature>
<feature type="transmembrane region" description="Helical; Name=5" evidence="1 2">
    <location>
        <begin position="179"/>
        <end position="200"/>
    </location>
</feature>
<feature type="topological domain" description="Cytoplasmic" evidence="1 2">
    <location>
        <begin position="201"/>
        <end position="223"/>
    </location>
</feature>
<feature type="transmembrane region" description="Helical; Name=6" evidence="1 2">
    <location>
        <begin position="224"/>
        <end position="248"/>
    </location>
</feature>
<feature type="topological domain" description="Extracellular" evidence="1 2">
    <location>
        <begin position="249"/>
        <end position="256"/>
    </location>
</feature>
<feature type="transmembrane region" description="Helical; Name=7" evidence="1 2">
    <location>
        <begin position="257"/>
        <end position="279"/>
    </location>
</feature>
<feature type="topological domain" description="Cytoplasmic" evidence="1 2">
    <location>
        <begin position="280"/>
        <end position="300"/>
    </location>
</feature>
<feature type="site" description="Important for receptor activation" evidence="1">
    <location>
        <position position="145"/>
    </location>
</feature>
<feature type="site" description="Important for receptor activation" evidence="1">
    <location>
        <position position="172"/>
    </location>
</feature>
<feature type="glycosylation site" description="N-linked (GlcNAc...) asparagine" evidence="2">
    <location>
        <position position="153"/>
    </location>
</feature>
<feature type="disulfide bond" evidence="1">
    <location>
        <begin position="79"/>
        <end position="170"/>
    </location>
</feature>
<feature type="sequence conflict" description="In Ref. 1; AAN03478." evidence="12" ref="1">
    <original>L</original>
    <variation>F</variation>
    <location>
        <position position="7"/>
    </location>
</feature>
<dbReference type="EMBL" id="AF539809">
    <property type="protein sequence ID" value="AAN03478.1"/>
    <property type="molecule type" value="Genomic_DNA"/>
</dbReference>
<dbReference type="EMBL" id="AB095745">
    <property type="protein sequence ID" value="BAC82555.1"/>
    <property type="molecule type" value="mRNA"/>
</dbReference>
<dbReference type="EMBL" id="BC132014">
    <property type="protein sequence ID" value="AAI32015.1"/>
    <property type="molecule type" value="mRNA"/>
</dbReference>
<dbReference type="EMBL" id="BC138099">
    <property type="protein sequence ID" value="AAI38100.1"/>
    <property type="molecule type" value="mRNA"/>
</dbReference>
<dbReference type="CCDS" id="CCDS21113.1"/>
<dbReference type="RefSeq" id="NP_918946.2">
    <property type="nucleotide sequence ID" value="NM_194057.3"/>
</dbReference>
<dbReference type="SMR" id="Q76JU9"/>
<dbReference type="FunCoup" id="Q76JU9">
    <property type="interactions" value="650"/>
</dbReference>
<dbReference type="STRING" id="10090.ENSMUSP00000055564"/>
<dbReference type="BindingDB" id="Q76JU9"/>
<dbReference type="ChEMBL" id="CHEMBL5411"/>
<dbReference type="GlyCosmos" id="Q76JU9">
    <property type="glycosylation" value="1 site, No reported glycans"/>
</dbReference>
<dbReference type="GlyGen" id="Q76JU9">
    <property type="glycosylation" value="1 site"/>
</dbReference>
<dbReference type="iPTMnet" id="Q76JU9"/>
<dbReference type="PhosphoSitePlus" id="Q76JU9"/>
<dbReference type="PaxDb" id="10090-ENSMUSP00000055564"/>
<dbReference type="Antibodypedia" id="15908">
    <property type="antibodies" value="327 antibodies from 35 providers"/>
</dbReference>
<dbReference type="DNASU" id="233081"/>
<dbReference type="Ensembl" id="ENSMUST00000052700.6">
    <property type="protein sequence ID" value="ENSMUSP00000055564.4"/>
    <property type="gene ID" value="ENSMUSG00000044453.6"/>
</dbReference>
<dbReference type="GeneID" id="233081"/>
<dbReference type="KEGG" id="mmu:233081"/>
<dbReference type="UCSC" id="uc009ggq.1">
    <property type="organism name" value="mouse"/>
</dbReference>
<dbReference type="AGR" id="MGI:2684079"/>
<dbReference type="CTD" id="2864"/>
<dbReference type="MGI" id="MGI:2684079">
    <property type="gene designation" value="Ffar1"/>
</dbReference>
<dbReference type="VEuPathDB" id="HostDB:ENSMUSG00000044453"/>
<dbReference type="eggNOG" id="ENOG502QVCS">
    <property type="taxonomic scope" value="Eukaryota"/>
</dbReference>
<dbReference type="GeneTree" id="ENSGT00990000203527"/>
<dbReference type="HOGENOM" id="CLU_009579_8_4_1"/>
<dbReference type="InParanoid" id="Q76JU9"/>
<dbReference type="OMA" id="CPAFALI"/>
<dbReference type="OrthoDB" id="9533924at2759"/>
<dbReference type="PhylomeDB" id="Q76JU9"/>
<dbReference type="TreeFam" id="TF350010"/>
<dbReference type="Reactome" id="R-MMU-381771">
    <property type="pathway name" value="Synthesis, secretion, and inactivation of Glucagon-like Peptide-1 (GLP-1)"/>
</dbReference>
<dbReference type="Reactome" id="R-MMU-400511">
    <property type="pathway name" value="Synthesis, secretion, and inactivation of Glucose-dependent Insulinotropic Polypeptide (GIP)"/>
</dbReference>
<dbReference type="Reactome" id="R-MMU-416476">
    <property type="pathway name" value="G alpha (q) signalling events"/>
</dbReference>
<dbReference type="Reactome" id="R-MMU-434316">
    <property type="pathway name" value="Fatty Acids bound to GPR40 (FFAR1) regulate insulin secretion"/>
</dbReference>
<dbReference type="Reactome" id="R-MMU-444209">
    <property type="pathway name" value="Free fatty acid receptors"/>
</dbReference>
<dbReference type="BioGRID-ORCS" id="233081">
    <property type="hits" value="4 hits in 77 CRISPR screens"/>
</dbReference>
<dbReference type="PRO" id="PR:Q76JU9"/>
<dbReference type="Proteomes" id="UP000000589">
    <property type="component" value="Chromosome 7"/>
</dbReference>
<dbReference type="RNAct" id="Q76JU9">
    <property type="molecule type" value="protein"/>
</dbReference>
<dbReference type="Bgee" id="ENSMUSG00000044453">
    <property type="expression patterns" value="Expressed in islet of Langerhans and 7 other cell types or tissues"/>
</dbReference>
<dbReference type="GO" id="GO:0005886">
    <property type="term" value="C:plasma membrane"/>
    <property type="evidence" value="ECO:0000314"/>
    <property type="project" value="UniProtKB"/>
</dbReference>
<dbReference type="GO" id="GO:0045125">
    <property type="term" value="F:bioactive lipid receptor activity"/>
    <property type="evidence" value="ECO:0000314"/>
    <property type="project" value="UniProtKB"/>
</dbReference>
<dbReference type="GO" id="GO:0004930">
    <property type="term" value="F:G protein-coupled receptor activity"/>
    <property type="evidence" value="ECO:0000314"/>
    <property type="project" value="MGI"/>
</dbReference>
<dbReference type="GO" id="GO:0008289">
    <property type="term" value="F:lipid binding"/>
    <property type="evidence" value="ECO:0007669"/>
    <property type="project" value="UniProtKB-KW"/>
</dbReference>
<dbReference type="GO" id="GO:0042593">
    <property type="term" value="P:glucose homeostasis"/>
    <property type="evidence" value="ECO:0000315"/>
    <property type="project" value="UniProtKB"/>
</dbReference>
<dbReference type="GO" id="GO:0030073">
    <property type="term" value="P:insulin secretion"/>
    <property type="evidence" value="ECO:0000315"/>
    <property type="project" value="MGI"/>
</dbReference>
<dbReference type="GO" id="GO:1990806">
    <property type="term" value="P:ligand-gated ion channel signaling pathway"/>
    <property type="evidence" value="ECO:0000314"/>
    <property type="project" value="MGI"/>
</dbReference>
<dbReference type="GO" id="GO:0032691">
    <property type="term" value="P:negative regulation of interleukin-1 beta production"/>
    <property type="evidence" value="ECO:0007669"/>
    <property type="project" value="Ensembl"/>
</dbReference>
<dbReference type="GO" id="GO:0007200">
    <property type="term" value="P:phospholipase C-activating G protein-coupled receptor signaling pathway"/>
    <property type="evidence" value="ECO:0000314"/>
    <property type="project" value="MGI"/>
</dbReference>
<dbReference type="GO" id="GO:0051928">
    <property type="term" value="P:positive regulation of calcium ion transport"/>
    <property type="evidence" value="ECO:0000314"/>
    <property type="project" value="UniProtKB"/>
</dbReference>
<dbReference type="GO" id="GO:0007204">
    <property type="term" value="P:positive regulation of cytosolic calcium ion concentration"/>
    <property type="evidence" value="ECO:0000250"/>
    <property type="project" value="UniProtKB"/>
</dbReference>
<dbReference type="GO" id="GO:0032024">
    <property type="term" value="P:positive regulation of insulin secretion"/>
    <property type="evidence" value="ECO:0000314"/>
    <property type="project" value="MGI"/>
</dbReference>
<dbReference type="GO" id="GO:0070542">
    <property type="term" value="P:response to fatty acid"/>
    <property type="evidence" value="ECO:0000314"/>
    <property type="project" value="UniProtKB"/>
</dbReference>
<dbReference type="FunFam" id="1.20.1070.10:FF:000173">
    <property type="entry name" value="Free fatty acid receptor 1"/>
    <property type="match status" value="1"/>
</dbReference>
<dbReference type="Gene3D" id="1.20.1070.10">
    <property type="entry name" value="Rhodopsin 7-helix transmembrane proteins"/>
    <property type="match status" value="1"/>
</dbReference>
<dbReference type="InterPro" id="IPR000276">
    <property type="entry name" value="GPCR_Rhodpsn"/>
</dbReference>
<dbReference type="InterPro" id="IPR017452">
    <property type="entry name" value="GPCR_Rhodpsn_7TM"/>
</dbReference>
<dbReference type="InterPro" id="IPR013312">
    <property type="entry name" value="GPR40-rel_orph"/>
</dbReference>
<dbReference type="InterPro" id="IPR013313">
    <property type="entry name" value="GPR40_recept_FA"/>
</dbReference>
<dbReference type="PANTHER" id="PTHR45822:SF4">
    <property type="entry name" value="FREE FATTY ACID RECEPTOR 1"/>
    <property type="match status" value="1"/>
</dbReference>
<dbReference type="PANTHER" id="PTHR45822">
    <property type="entry name" value="FREE FATTY ACID RECEPTOR 2-RELATED"/>
    <property type="match status" value="1"/>
</dbReference>
<dbReference type="Pfam" id="PF00001">
    <property type="entry name" value="7tm_1"/>
    <property type="match status" value="1"/>
</dbReference>
<dbReference type="PRINTS" id="PR01905">
    <property type="entry name" value="FATTYACIDR"/>
</dbReference>
<dbReference type="PRINTS" id="PR00237">
    <property type="entry name" value="GPCRRHODOPSN"/>
</dbReference>
<dbReference type="PRINTS" id="PR01904">
    <property type="entry name" value="GPR40FAMILY"/>
</dbReference>
<dbReference type="SUPFAM" id="SSF81321">
    <property type="entry name" value="Family A G protein-coupled receptor-like"/>
    <property type="match status" value="1"/>
</dbReference>
<dbReference type="PROSITE" id="PS50262">
    <property type="entry name" value="G_PROTEIN_RECEP_F1_2"/>
    <property type="match status" value="1"/>
</dbReference>
<reference key="1">
    <citation type="journal article" date="2003" name="J. Biol. Chem.">
        <title>The orphan G protein-coupled receptor GPR40 is activated by medium and long-chain fatty acids.</title>
        <authorList>
            <person name="Briscoe C.P."/>
            <person name="Tadayyon M."/>
            <person name="Andrews J.L."/>
            <person name="Benson W.G."/>
            <person name="Chambers J.K."/>
            <person name="Eilert M.M."/>
            <person name="Ellis C."/>
            <person name="Elshourbagy N.A."/>
            <person name="Goetz A.S."/>
            <person name="Minnick D.T."/>
            <person name="Murdock P.R."/>
            <person name="Sauls H.R. Jr."/>
            <person name="Shabon U."/>
            <person name="Spinage L.D."/>
            <person name="Strum J.C."/>
            <person name="Szekeres P.G."/>
            <person name="Tan K.B."/>
            <person name="Way J.M."/>
            <person name="Ignar D.M."/>
            <person name="Wilson S."/>
            <person name="Muir A.I."/>
        </authorList>
    </citation>
    <scope>NUCLEOTIDE SEQUENCE [GENOMIC DNA]</scope>
    <scope>TISSUE SPECIFICITY</scope>
    <source>
        <strain>BALB/cJ</strain>
    </source>
</reference>
<reference key="2">
    <citation type="journal article" date="2003" name="Nature">
        <title>Free fatty acids regulate insulin secretion from pancreatic beta cells through GPR40.</title>
        <authorList>
            <person name="Itoh Y."/>
            <person name="Kawamata Y."/>
            <person name="Harada M."/>
            <person name="Kobayashi M."/>
            <person name="Fujii R."/>
            <person name="Fukusumi S."/>
            <person name="Ogi K."/>
            <person name="Hosoya M."/>
            <person name="Tanaka Y."/>
            <person name="Uejima H."/>
            <person name="Tanaka H."/>
            <person name="Maruyama M."/>
            <person name="Satoh R."/>
            <person name="Okubo S."/>
            <person name="Kizawa H."/>
            <person name="Komatsu H."/>
            <person name="Matsumura F."/>
            <person name="Noguchi Y."/>
            <person name="Shinohara T."/>
            <person name="Hinuma S."/>
            <person name="Fujisawa Y."/>
            <person name="Fujino M."/>
        </authorList>
    </citation>
    <scope>NUCLEOTIDE SEQUENCE [MRNA]</scope>
    <scope>FUNCTION</scope>
</reference>
<reference key="3">
    <citation type="journal article" date="2004" name="Genome Res.">
        <title>The status, quality, and expansion of the NIH full-length cDNA project: the Mammalian Gene Collection (MGC).</title>
        <authorList>
            <consortium name="The MGC Project Team"/>
        </authorList>
    </citation>
    <scope>NUCLEOTIDE SEQUENCE [LARGE SCALE MRNA]</scope>
    <source>
        <tissue>Brain</tissue>
    </source>
</reference>
<reference key="4">
    <citation type="journal article" date="2005" name="Cell Tissue Res.">
        <title>Free fatty acid receptor 1 (FFA(1)R/GPR40) and its involvement in fatty-acid-stimulated insulin secretion.</title>
        <authorList>
            <person name="Salehi A."/>
            <person name="Flodgren E."/>
            <person name="Nilsson N.E."/>
            <person name="Jimenez-Feltstrom J."/>
            <person name="Miyazaki J."/>
            <person name="Owman C."/>
            <person name="Olde B."/>
        </authorList>
    </citation>
    <scope>FUNCTION</scope>
    <scope>SUBCELLULAR LOCATION</scope>
    <scope>TISSUE SPECIFICITY</scope>
</reference>
<reference key="5">
    <citation type="journal article" date="2007" name="Diabetes">
        <title>GPR40 is necessary but not sufficient for fatty acid stimulation of insulin secretion in vivo.</title>
        <authorList>
            <person name="Latour M.G."/>
            <person name="Alquier T."/>
            <person name="Oseid E."/>
            <person name="Tremblay C."/>
            <person name="Jetton T.L."/>
            <person name="Luo J."/>
            <person name="Lin D.C."/>
            <person name="Poitout V."/>
        </authorList>
    </citation>
    <scope>FUNCTION</scope>
    <scope>DISRUPTION PHENOTYPE</scope>
</reference>
<reference key="6">
    <citation type="journal article" date="2008" name="Diabetes">
        <title>The fatty acid receptor GPR40 plays a role in insulin secretion in vivo after high-fat feeding.</title>
        <authorList>
            <person name="Kebede M."/>
            <person name="Alquier T."/>
            <person name="Latour M.G."/>
            <person name="Semache M."/>
            <person name="Tremblay C."/>
            <person name="Poitout V."/>
        </authorList>
    </citation>
    <scope>FUNCTION</scope>
    <scope>DISRUPTION PHENOTYPE</scope>
</reference>
<reference key="7">
    <citation type="journal article" date="2013" name="J. Biol. Chem.">
        <title>The free fatty acid receptor G protein-coupled receptor 40 (GPR40) protects from bone loss through inhibition of osteoclast differentiation.</title>
        <authorList>
            <person name="Wauquier F."/>
            <person name="Philippe C."/>
            <person name="Leotoing L."/>
            <person name="Mercier S."/>
            <person name="Davicco M.J."/>
            <person name="Lebecque P."/>
            <person name="Guicheux J."/>
            <person name="Pilet P."/>
            <person name="Miot-Noirault E."/>
            <person name="Poitout V."/>
            <person name="Alquier T."/>
            <person name="Coxam V."/>
            <person name="Wittrant Y."/>
        </authorList>
    </citation>
    <scope>FUNCTION</scope>
    <scope>DISRUPTION PHENOTYPE</scope>
</reference>
<reference key="8">
    <citation type="journal article" date="2013" name="Mol. Cell. Endocrinol.">
        <title>Activation of FFA1 mediates GLP-1 secretion in mice. Evidence for allosterism at FFA1.</title>
        <authorList>
            <person name="Xiong Y."/>
            <person name="Swaminath G."/>
            <person name="Cao Q."/>
            <person name="Yang L."/>
            <person name="Guo Q."/>
            <person name="Salomonis H."/>
            <person name="Lu J."/>
            <person name="Houze J.B."/>
            <person name="Dransfield P.J."/>
            <person name="Wang Y."/>
            <person name="Liu J.J."/>
            <person name="Wong S."/>
            <person name="Schwandner R."/>
            <person name="Steger F."/>
            <person name="Baribault H."/>
            <person name="Liu L."/>
            <person name="Coberly S."/>
            <person name="Miao L."/>
            <person name="Zhang J."/>
            <person name="Lin D.C."/>
            <person name="Schwarz M."/>
        </authorList>
    </citation>
    <scope>FUNCTION</scope>
    <scope>ACTIVITY REGULATION</scope>
    <scope>DISRUPTION PHENOTYPE</scope>
</reference>
<reference key="9">
    <citation type="journal article" date="2013" name="PLoS ONE">
        <title>A novel antidiabetic drug, fasiglifam/TAK-875, acts as an ago-allosteric modulator of FFAR1.</title>
        <authorList>
            <person name="Yabuki C."/>
            <person name="Komatsu H."/>
            <person name="Tsujihata Y."/>
            <person name="Maeda R."/>
            <person name="Ito R."/>
            <person name="Matsuda-Nagasumi K."/>
            <person name="Sakuma K."/>
            <person name="Miyawaki K."/>
            <person name="Kikuchi N."/>
            <person name="Takeuchi K."/>
            <person name="Habata Y."/>
            <person name="Mori M."/>
        </authorList>
    </citation>
    <scope>FUNCTION</scope>
    <scope>SUBCELLULAR LOCATION</scope>
    <scope>ACTIVITY REGULATION</scope>
</reference>
<proteinExistence type="evidence at protein level"/>
<protein>
    <recommendedName>
        <fullName>Free fatty acid receptor 1</fullName>
    </recommendedName>
    <alternativeName>
        <fullName>G-protein coupled receptor 40</fullName>
    </alternativeName>
</protein>
<name>FFAR1_MOUSE</name>
<evidence type="ECO:0000250" key="1">
    <source>
        <dbReference type="UniProtKB" id="O14842"/>
    </source>
</evidence>
<evidence type="ECO:0000255" key="2"/>
<evidence type="ECO:0000255" key="3">
    <source>
        <dbReference type="PROSITE-ProRule" id="PRU00521"/>
    </source>
</evidence>
<evidence type="ECO:0000269" key="4">
    <source>
    </source>
</evidence>
<evidence type="ECO:0000269" key="5">
    <source>
    </source>
</evidence>
<evidence type="ECO:0000269" key="6">
    <source>
    </source>
</evidence>
<evidence type="ECO:0000269" key="7">
    <source>
    </source>
</evidence>
<evidence type="ECO:0000269" key="8">
    <source>
    </source>
</evidence>
<evidence type="ECO:0000269" key="9">
    <source>
    </source>
</evidence>
<evidence type="ECO:0000269" key="10">
    <source>
    </source>
</evidence>
<evidence type="ECO:0000269" key="11">
    <source>
    </source>
</evidence>
<evidence type="ECO:0000305" key="12"/>
<gene>
    <name type="primary">Ffar1</name>
    <name type="synonym">Gpr40</name>
</gene>